<name>ENGB_FRATF</name>
<keyword id="KW-0131">Cell cycle</keyword>
<keyword id="KW-0132">Cell division</keyword>
<keyword id="KW-0342">GTP-binding</keyword>
<keyword id="KW-0460">Magnesium</keyword>
<keyword id="KW-0479">Metal-binding</keyword>
<keyword id="KW-0547">Nucleotide-binding</keyword>
<keyword id="KW-0717">Septation</keyword>
<sequence>MNYSKAKYIMGAAKVSQLPEDTGVEVAFAGRSNAGKSSALNTLTDQKGLARVSKTPGRTQLINLFDLGNNNRLVDLPGYGYAKVSESIKRQWQSEMENYLTSRKCLNGIVLLVDSRHELKEFDSLMIEMAISFDLNLHILLTKADKLNNKERAQANRMIESFLKTFVSTDKISYQLFSSLTKMGLDKFKEKLDTWYQ</sequence>
<reference key="1">
    <citation type="journal article" date="2009" name="PLoS ONE">
        <title>Complete genome sequence of Francisella tularensis subspecies holarctica FTNF002-00.</title>
        <authorList>
            <person name="Barabote R.D."/>
            <person name="Xie G."/>
            <person name="Brettin T.S."/>
            <person name="Hinrichs S.H."/>
            <person name="Fey P.D."/>
            <person name="Jay J.J."/>
            <person name="Engle J.L."/>
            <person name="Godbole S.D."/>
            <person name="Noronha J.M."/>
            <person name="Scheuermann R.H."/>
            <person name="Zhou L.W."/>
            <person name="Lion C."/>
            <person name="Dempsey M.P."/>
        </authorList>
    </citation>
    <scope>NUCLEOTIDE SEQUENCE [LARGE SCALE GENOMIC DNA]</scope>
    <source>
        <strain>FTNF002-00 / FTA</strain>
    </source>
</reference>
<evidence type="ECO:0000255" key="1">
    <source>
        <dbReference type="HAMAP-Rule" id="MF_00321"/>
    </source>
</evidence>
<dbReference type="EMBL" id="CP000803">
    <property type="protein sequence ID" value="ABU61433.2"/>
    <property type="molecule type" value="Genomic_DNA"/>
</dbReference>
<dbReference type="SMR" id="A7NBT0"/>
<dbReference type="KEGG" id="fta:FTA_0957"/>
<dbReference type="HOGENOM" id="CLU_033732_1_0_6"/>
<dbReference type="GO" id="GO:0005829">
    <property type="term" value="C:cytosol"/>
    <property type="evidence" value="ECO:0007669"/>
    <property type="project" value="TreeGrafter"/>
</dbReference>
<dbReference type="GO" id="GO:0005525">
    <property type="term" value="F:GTP binding"/>
    <property type="evidence" value="ECO:0007669"/>
    <property type="project" value="UniProtKB-UniRule"/>
</dbReference>
<dbReference type="GO" id="GO:0046872">
    <property type="term" value="F:metal ion binding"/>
    <property type="evidence" value="ECO:0007669"/>
    <property type="project" value="UniProtKB-KW"/>
</dbReference>
<dbReference type="GO" id="GO:0000917">
    <property type="term" value="P:division septum assembly"/>
    <property type="evidence" value="ECO:0007669"/>
    <property type="project" value="UniProtKB-KW"/>
</dbReference>
<dbReference type="CDD" id="cd01876">
    <property type="entry name" value="YihA_EngB"/>
    <property type="match status" value="1"/>
</dbReference>
<dbReference type="FunFam" id="3.40.50.300:FF:000098">
    <property type="entry name" value="Probable GTP-binding protein EngB"/>
    <property type="match status" value="1"/>
</dbReference>
<dbReference type="Gene3D" id="3.40.50.300">
    <property type="entry name" value="P-loop containing nucleotide triphosphate hydrolases"/>
    <property type="match status" value="1"/>
</dbReference>
<dbReference type="HAMAP" id="MF_00321">
    <property type="entry name" value="GTPase_EngB"/>
    <property type="match status" value="1"/>
</dbReference>
<dbReference type="InterPro" id="IPR030393">
    <property type="entry name" value="G_ENGB_dom"/>
</dbReference>
<dbReference type="InterPro" id="IPR006073">
    <property type="entry name" value="GTP-bd"/>
</dbReference>
<dbReference type="InterPro" id="IPR019987">
    <property type="entry name" value="GTP-bd_ribosome_bio_YsxC"/>
</dbReference>
<dbReference type="InterPro" id="IPR027417">
    <property type="entry name" value="P-loop_NTPase"/>
</dbReference>
<dbReference type="NCBIfam" id="TIGR03598">
    <property type="entry name" value="GTPase_YsxC"/>
    <property type="match status" value="1"/>
</dbReference>
<dbReference type="PANTHER" id="PTHR11649:SF13">
    <property type="entry name" value="ENGB-TYPE G DOMAIN-CONTAINING PROTEIN"/>
    <property type="match status" value="1"/>
</dbReference>
<dbReference type="PANTHER" id="PTHR11649">
    <property type="entry name" value="MSS1/TRME-RELATED GTP-BINDING PROTEIN"/>
    <property type="match status" value="1"/>
</dbReference>
<dbReference type="Pfam" id="PF01926">
    <property type="entry name" value="MMR_HSR1"/>
    <property type="match status" value="1"/>
</dbReference>
<dbReference type="SUPFAM" id="SSF52540">
    <property type="entry name" value="P-loop containing nucleoside triphosphate hydrolases"/>
    <property type="match status" value="1"/>
</dbReference>
<dbReference type="PROSITE" id="PS51706">
    <property type="entry name" value="G_ENGB"/>
    <property type="match status" value="1"/>
</dbReference>
<comment type="function">
    <text evidence="1">Necessary for normal cell division and for the maintenance of normal septation.</text>
</comment>
<comment type="cofactor">
    <cofactor evidence="1">
        <name>Mg(2+)</name>
        <dbReference type="ChEBI" id="CHEBI:18420"/>
    </cofactor>
</comment>
<comment type="similarity">
    <text evidence="1">Belongs to the TRAFAC class TrmE-Era-EngA-EngB-Septin-like GTPase superfamily. EngB GTPase family.</text>
</comment>
<protein>
    <recommendedName>
        <fullName evidence="1">Probable GTP-binding protein EngB</fullName>
    </recommendedName>
</protein>
<gene>
    <name evidence="1" type="primary">engB</name>
    <name type="ordered locus">FTA_0957</name>
</gene>
<organism>
    <name type="scientific">Francisella tularensis subsp. holarctica (strain FTNF002-00 / FTA)</name>
    <dbReference type="NCBI Taxonomy" id="458234"/>
    <lineage>
        <taxon>Bacteria</taxon>
        <taxon>Pseudomonadati</taxon>
        <taxon>Pseudomonadota</taxon>
        <taxon>Gammaproteobacteria</taxon>
        <taxon>Thiotrichales</taxon>
        <taxon>Francisellaceae</taxon>
        <taxon>Francisella</taxon>
    </lineage>
</organism>
<accession>A7NBT0</accession>
<proteinExistence type="inferred from homology"/>
<feature type="chain" id="PRO_1000072017" description="Probable GTP-binding protein EngB">
    <location>
        <begin position="1"/>
        <end position="197"/>
    </location>
</feature>
<feature type="domain" description="EngB-type G" evidence="1">
    <location>
        <begin position="22"/>
        <end position="197"/>
    </location>
</feature>
<feature type="binding site" evidence="1">
    <location>
        <begin position="30"/>
        <end position="37"/>
    </location>
    <ligand>
        <name>GTP</name>
        <dbReference type="ChEBI" id="CHEBI:37565"/>
    </ligand>
</feature>
<feature type="binding site" evidence="1">
    <location>
        <position position="37"/>
    </location>
    <ligand>
        <name>Mg(2+)</name>
        <dbReference type="ChEBI" id="CHEBI:18420"/>
    </ligand>
</feature>
<feature type="binding site" evidence="1">
    <location>
        <begin position="57"/>
        <end position="61"/>
    </location>
    <ligand>
        <name>GTP</name>
        <dbReference type="ChEBI" id="CHEBI:37565"/>
    </ligand>
</feature>
<feature type="binding site" evidence="1">
    <location>
        <position position="59"/>
    </location>
    <ligand>
        <name>Mg(2+)</name>
        <dbReference type="ChEBI" id="CHEBI:18420"/>
    </ligand>
</feature>
<feature type="binding site" evidence="1">
    <location>
        <begin position="75"/>
        <end position="78"/>
    </location>
    <ligand>
        <name>GTP</name>
        <dbReference type="ChEBI" id="CHEBI:37565"/>
    </ligand>
</feature>
<feature type="binding site" evidence="1">
    <location>
        <begin position="142"/>
        <end position="145"/>
    </location>
    <ligand>
        <name>GTP</name>
        <dbReference type="ChEBI" id="CHEBI:37565"/>
    </ligand>
</feature>
<feature type="binding site" evidence="1">
    <location>
        <begin position="177"/>
        <end position="179"/>
    </location>
    <ligand>
        <name>GTP</name>
        <dbReference type="ChEBI" id="CHEBI:37565"/>
    </ligand>
</feature>